<keyword id="KW-0903">Direct protein sequencing</keyword>
<sequence length="7" mass="790">VTLDVED</sequence>
<proteinExistence type="evidence at protein level"/>
<feature type="chain" id="PRO_0000285973" description="Unknown protein 2 from 2D-PAGE">
    <location>
        <begin position="1" status="less than"/>
        <end position="7" status="greater than"/>
    </location>
</feature>
<feature type="non-terminal residue" evidence="2">
    <location>
        <position position="1"/>
    </location>
</feature>
<feature type="non-terminal residue" evidence="2">
    <location>
        <position position="7"/>
    </location>
</feature>
<reference evidence="3" key="1">
    <citation type="journal article" date="2002" name="Proteomics">
        <title>High pressure effects step-wise altered protein expression in Lactobacillus sanfranciscensis.</title>
        <authorList>
            <person name="Drews O."/>
            <person name="Weiss W."/>
            <person name="Reil G."/>
            <person name="Parlar H."/>
            <person name="Wait R."/>
            <person name="Goerg A."/>
        </authorList>
    </citation>
    <scope>PROTEIN SEQUENCE</scope>
    <source>
        <strain evidence="1">ATCC 27651 / DSM 20451 / JCM 5668 / KCTC 3205 / NCIMB 702811 / NRRL B-3934 / L-12</strain>
    </source>
</reference>
<comment type="miscellaneous">
    <text evidence="1">On the 2D-gel the determined MW of this unknown protein is: 15 kDa.</text>
</comment>
<accession>P83530</accession>
<evidence type="ECO:0000269" key="1">
    <source>
    </source>
</evidence>
<evidence type="ECO:0000303" key="2">
    <source>
    </source>
</evidence>
<evidence type="ECO:0000305" key="3"/>
<protein>
    <recommendedName>
        <fullName>Unknown protein 2 from 2D-PAGE</fullName>
    </recommendedName>
</protein>
<organism>
    <name type="scientific">Fructilactobacillus sanfranciscensis</name>
    <name type="common">Lactobacillus sanfranciscensis</name>
    <dbReference type="NCBI Taxonomy" id="1625"/>
    <lineage>
        <taxon>Bacteria</taxon>
        <taxon>Bacillati</taxon>
        <taxon>Bacillota</taxon>
        <taxon>Bacilli</taxon>
        <taxon>Lactobacillales</taxon>
        <taxon>Lactobacillaceae</taxon>
        <taxon>Fructilactobacillus</taxon>
    </lineage>
</organism>
<name>UP02_FRUSA</name>